<evidence type="ECO:0000255" key="1">
    <source>
        <dbReference type="HAMAP-Rule" id="MF_00300"/>
    </source>
</evidence>
<keyword id="KW-0028">Amino-acid biosynthesis</keyword>
<keyword id="KW-0057">Aromatic amino acid biosynthesis</keyword>
<keyword id="KW-0274">FAD</keyword>
<keyword id="KW-0285">Flavoprotein</keyword>
<keyword id="KW-0288">FMN</keyword>
<keyword id="KW-0456">Lyase</keyword>
<keyword id="KW-0521">NADP</keyword>
<keyword id="KW-1185">Reference proteome</keyword>
<organism>
    <name type="scientific">Kocuria rhizophila (strain ATCC 9341 / DSM 348 / NBRC 103217 / DC2201)</name>
    <dbReference type="NCBI Taxonomy" id="378753"/>
    <lineage>
        <taxon>Bacteria</taxon>
        <taxon>Bacillati</taxon>
        <taxon>Actinomycetota</taxon>
        <taxon>Actinomycetes</taxon>
        <taxon>Micrococcales</taxon>
        <taxon>Micrococcaceae</taxon>
        <taxon>Kocuria</taxon>
    </lineage>
</organism>
<dbReference type="EC" id="4.2.3.5" evidence="1"/>
<dbReference type="EMBL" id="AP009152">
    <property type="protein sequence ID" value="BAG29689.1"/>
    <property type="molecule type" value="Genomic_DNA"/>
</dbReference>
<dbReference type="RefSeq" id="WP_012398410.1">
    <property type="nucleotide sequence ID" value="NC_010617.1"/>
</dbReference>
<dbReference type="SMR" id="B2GI97"/>
<dbReference type="STRING" id="378753.KRH_13420"/>
<dbReference type="KEGG" id="krh:KRH_13420"/>
<dbReference type="eggNOG" id="COG0082">
    <property type="taxonomic scope" value="Bacteria"/>
</dbReference>
<dbReference type="HOGENOM" id="CLU_034547_2_0_11"/>
<dbReference type="OrthoDB" id="9771806at2"/>
<dbReference type="UniPathway" id="UPA00053">
    <property type="reaction ID" value="UER00090"/>
</dbReference>
<dbReference type="Proteomes" id="UP000008838">
    <property type="component" value="Chromosome"/>
</dbReference>
<dbReference type="GO" id="GO:0005829">
    <property type="term" value="C:cytosol"/>
    <property type="evidence" value="ECO:0007669"/>
    <property type="project" value="TreeGrafter"/>
</dbReference>
<dbReference type="GO" id="GO:0004107">
    <property type="term" value="F:chorismate synthase activity"/>
    <property type="evidence" value="ECO:0007669"/>
    <property type="project" value="UniProtKB-UniRule"/>
</dbReference>
<dbReference type="GO" id="GO:0010181">
    <property type="term" value="F:FMN binding"/>
    <property type="evidence" value="ECO:0007669"/>
    <property type="project" value="TreeGrafter"/>
</dbReference>
<dbReference type="GO" id="GO:0008652">
    <property type="term" value="P:amino acid biosynthetic process"/>
    <property type="evidence" value="ECO:0007669"/>
    <property type="project" value="UniProtKB-KW"/>
</dbReference>
<dbReference type="GO" id="GO:0009073">
    <property type="term" value="P:aromatic amino acid family biosynthetic process"/>
    <property type="evidence" value="ECO:0007669"/>
    <property type="project" value="UniProtKB-KW"/>
</dbReference>
<dbReference type="GO" id="GO:0009423">
    <property type="term" value="P:chorismate biosynthetic process"/>
    <property type="evidence" value="ECO:0007669"/>
    <property type="project" value="UniProtKB-UniRule"/>
</dbReference>
<dbReference type="CDD" id="cd07304">
    <property type="entry name" value="Chorismate_synthase"/>
    <property type="match status" value="1"/>
</dbReference>
<dbReference type="FunFam" id="3.60.150.10:FF:000002">
    <property type="entry name" value="Chorismate synthase"/>
    <property type="match status" value="1"/>
</dbReference>
<dbReference type="Gene3D" id="3.60.150.10">
    <property type="entry name" value="Chorismate synthase AroC"/>
    <property type="match status" value="1"/>
</dbReference>
<dbReference type="HAMAP" id="MF_00300">
    <property type="entry name" value="Chorismate_synth"/>
    <property type="match status" value="1"/>
</dbReference>
<dbReference type="InterPro" id="IPR000453">
    <property type="entry name" value="Chorismate_synth"/>
</dbReference>
<dbReference type="InterPro" id="IPR035904">
    <property type="entry name" value="Chorismate_synth_AroC_sf"/>
</dbReference>
<dbReference type="InterPro" id="IPR020541">
    <property type="entry name" value="Chorismate_synthase_CS"/>
</dbReference>
<dbReference type="NCBIfam" id="TIGR00033">
    <property type="entry name" value="aroC"/>
    <property type="match status" value="1"/>
</dbReference>
<dbReference type="NCBIfam" id="NF003793">
    <property type="entry name" value="PRK05382.1"/>
    <property type="match status" value="1"/>
</dbReference>
<dbReference type="PANTHER" id="PTHR21085">
    <property type="entry name" value="CHORISMATE SYNTHASE"/>
    <property type="match status" value="1"/>
</dbReference>
<dbReference type="PANTHER" id="PTHR21085:SF0">
    <property type="entry name" value="CHORISMATE SYNTHASE"/>
    <property type="match status" value="1"/>
</dbReference>
<dbReference type="Pfam" id="PF01264">
    <property type="entry name" value="Chorismate_synt"/>
    <property type="match status" value="1"/>
</dbReference>
<dbReference type="PIRSF" id="PIRSF001456">
    <property type="entry name" value="Chorismate_synth"/>
    <property type="match status" value="1"/>
</dbReference>
<dbReference type="SUPFAM" id="SSF103263">
    <property type="entry name" value="Chorismate synthase, AroC"/>
    <property type="match status" value="1"/>
</dbReference>
<dbReference type="PROSITE" id="PS00787">
    <property type="entry name" value="CHORISMATE_SYNTHASE_1"/>
    <property type="match status" value="1"/>
</dbReference>
<dbReference type="PROSITE" id="PS00788">
    <property type="entry name" value="CHORISMATE_SYNTHASE_2"/>
    <property type="match status" value="1"/>
</dbReference>
<dbReference type="PROSITE" id="PS00789">
    <property type="entry name" value="CHORISMATE_SYNTHASE_3"/>
    <property type="match status" value="1"/>
</dbReference>
<gene>
    <name evidence="1" type="primary">aroC</name>
    <name type="ordered locus">KRH_13420</name>
</gene>
<comment type="function">
    <text evidence="1">Catalyzes the anti-1,4-elimination of the C-3 phosphate and the C-6 proR hydrogen from 5-enolpyruvylshikimate-3-phosphate (EPSP) to yield chorismate, which is the branch point compound that serves as the starting substrate for the three terminal pathways of aromatic amino acid biosynthesis. This reaction introduces a second double bond into the aromatic ring system.</text>
</comment>
<comment type="catalytic activity">
    <reaction evidence="1">
        <text>5-O-(1-carboxyvinyl)-3-phosphoshikimate = chorismate + phosphate</text>
        <dbReference type="Rhea" id="RHEA:21020"/>
        <dbReference type="ChEBI" id="CHEBI:29748"/>
        <dbReference type="ChEBI" id="CHEBI:43474"/>
        <dbReference type="ChEBI" id="CHEBI:57701"/>
        <dbReference type="EC" id="4.2.3.5"/>
    </reaction>
</comment>
<comment type="cofactor">
    <cofactor evidence="1">
        <name>FMNH2</name>
        <dbReference type="ChEBI" id="CHEBI:57618"/>
    </cofactor>
    <text evidence="1">Reduced FMN (FMNH(2)).</text>
</comment>
<comment type="pathway">
    <text evidence="1">Metabolic intermediate biosynthesis; chorismate biosynthesis; chorismate from D-erythrose 4-phosphate and phosphoenolpyruvate: step 7/7.</text>
</comment>
<comment type="subunit">
    <text evidence="1">Homotetramer.</text>
</comment>
<comment type="similarity">
    <text evidence="1">Belongs to the chorismate synthase family.</text>
</comment>
<feature type="chain" id="PRO_1000115360" description="Chorismate synthase">
    <location>
        <begin position="1"/>
        <end position="416"/>
    </location>
</feature>
<feature type="binding site" evidence="1">
    <location>
        <position position="40"/>
    </location>
    <ligand>
        <name>NADP(+)</name>
        <dbReference type="ChEBI" id="CHEBI:58349"/>
    </ligand>
</feature>
<feature type="binding site" evidence="1">
    <location>
        <position position="46"/>
    </location>
    <ligand>
        <name>NADP(+)</name>
        <dbReference type="ChEBI" id="CHEBI:58349"/>
    </ligand>
</feature>
<feature type="binding site" evidence="1">
    <location>
        <begin position="135"/>
        <end position="137"/>
    </location>
    <ligand>
        <name>FMN</name>
        <dbReference type="ChEBI" id="CHEBI:58210"/>
    </ligand>
</feature>
<feature type="binding site" evidence="1">
    <location>
        <begin position="256"/>
        <end position="257"/>
    </location>
    <ligand>
        <name>FMN</name>
        <dbReference type="ChEBI" id="CHEBI:58210"/>
    </ligand>
</feature>
<feature type="binding site" evidence="1">
    <location>
        <position position="300"/>
    </location>
    <ligand>
        <name>FMN</name>
        <dbReference type="ChEBI" id="CHEBI:58210"/>
    </ligand>
</feature>
<feature type="binding site" evidence="1">
    <location>
        <begin position="315"/>
        <end position="319"/>
    </location>
    <ligand>
        <name>FMN</name>
        <dbReference type="ChEBI" id="CHEBI:58210"/>
    </ligand>
</feature>
<feature type="binding site" evidence="1">
    <location>
        <position position="341"/>
    </location>
    <ligand>
        <name>FMN</name>
        <dbReference type="ChEBI" id="CHEBI:58210"/>
    </ligand>
</feature>
<protein>
    <recommendedName>
        <fullName evidence="1">Chorismate synthase</fullName>
        <shortName evidence="1">CS</shortName>
        <ecNumber evidence="1">4.2.3.5</ecNumber>
    </recommendedName>
    <alternativeName>
        <fullName evidence="1">5-enolpyruvylshikimate-3-phosphate phospholyase</fullName>
    </alternativeName>
</protein>
<sequence>MLRWLTAGESHGEALVGIVEGVPAGVELTTGMVQDALARRRLGYGRGARMKFEQDRVRILGGVRHGLTQGGPVAIEIANTEWPKWQDVMSSDPVDPQVLEGRARNAPLTRPRPGHADLTGMQKYGFDEARPVLERASARETATRVALGVVASQILAALGVRLVSHTTAVAEVAVPEGAPLPGPQDVPALDADPLRCFDAETSAAMVAAVDAAHKAGETLGGVVEVLAEGMPPGLGSYVHWDRRLDSRLAGALMGIQAIKGVEVGDGFRTAQRPGSLAHDETLRADGSVHRVSNRAGGIEGGMSTGDLLRVRAAMKPIATVPRSLHTVDVATGEPARAHHQRSDVCAVPAAGVVAEAMVALVLAEAALEKFGGDSVAELVRNRDSYLAGIPESLRTSPELADPAALAALDEVRGDLS</sequence>
<reference key="1">
    <citation type="journal article" date="2008" name="J. Bacteriol.">
        <title>Complete genome sequence of the soil actinomycete Kocuria rhizophila.</title>
        <authorList>
            <person name="Takarada H."/>
            <person name="Sekine M."/>
            <person name="Kosugi H."/>
            <person name="Matsuo Y."/>
            <person name="Fujisawa T."/>
            <person name="Omata S."/>
            <person name="Kishi E."/>
            <person name="Shimizu A."/>
            <person name="Tsukatani N."/>
            <person name="Tanikawa S."/>
            <person name="Fujita N."/>
            <person name="Harayama S."/>
        </authorList>
    </citation>
    <scope>NUCLEOTIDE SEQUENCE [LARGE SCALE GENOMIC DNA]</scope>
    <source>
        <strain>ATCC 9341 / DSM 348 / NBRC 103217 / DC2201</strain>
    </source>
</reference>
<accession>B2GI97</accession>
<name>AROC_KOCRD</name>
<proteinExistence type="inferred from homology"/>